<reference key="1">
    <citation type="journal article" date="2011" name="PLoS Genet.">
        <title>The evolution of host specialization in the vertebrate gut symbiont Lactobacillus reuteri.</title>
        <authorList>
            <person name="Frese S.A."/>
            <person name="Benson A.K."/>
            <person name="Tannock G.W."/>
            <person name="Loach D.M."/>
            <person name="Kim J."/>
            <person name="Zhang M."/>
            <person name="Oh P.L."/>
            <person name="Heng N.C."/>
            <person name="Patil P.B."/>
            <person name="Juge N."/>
            <person name="Mackenzie D.A."/>
            <person name="Pearson B.M."/>
            <person name="Lapidus A."/>
            <person name="Dalin E."/>
            <person name="Tice H."/>
            <person name="Goltsman E."/>
            <person name="Land M."/>
            <person name="Hauser L."/>
            <person name="Ivanova N."/>
            <person name="Kyrpides N.C."/>
            <person name="Walter J."/>
        </authorList>
    </citation>
    <scope>NUCLEOTIDE SEQUENCE [LARGE SCALE GENOMIC DNA]</scope>
    <source>
        <strain>DSM 20016</strain>
    </source>
</reference>
<name>TYSY_LIMRD</name>
<dbReference type="EC" id="2.1.1.45" evidence="1"/>
<dbReference type="EMBL" id="CP000705">
    <property type="protein sequence ID" value="ABQ83033.1"/>
    <property type="molecule type" value="Genomic_DNA"/>
</dbReference>
<dbReference type="RefSeq" id="WP_003668102.1">
    <property type="nucleotide sequence ID" value="NC_009513.1"/>
</dbReference>
<dbReference type="SMR" id="A5VJK9"/>
<dbReference type="STRING" id="557436.Lreu_0769"/>
<dbReference type="KEGG" id="lre:Lreu_0769"/>
<dbReference type="PATRIC" id="fig|557436.17.peg.459"/>
<dbReference type="eggNOG" id="COG0207">
    <property type="taxonomic scope" value="Bacteria"/>
</dbReference>
<dbReference type="HOGENOM" id="CLU_021669_0_0_9"/>
<dbReference type="UniPathway" id="UPA00575"/>
<dbReference type="Proteomes" id="UP000001991">
    <property type="component" value="Chromosome"/>
</dbReference>
<dbReference type="GO" id="GO:0005829">
    <property type="term" value="C:cytosol"/>
    <property type="evidence" value="ECO:0007669"/>
    <property type="project" value="TreeGrafter"/>
</dbReference>
<dbReference type="GO" id="GO:0004799">
    <property type="term" value="F:thymidylate synthase activity"/>
    <property type="evidence" value="ECO:0007669"/>
    <property type="project" value="UniProtKB-UniRule"/>
</dbReference>
<dbReference type="GO" id="GO:0006231">
    <property type="term" value="P:dTMP biosynthetic process"/>
    <property type="evidence" value="ECO:0007669"/>
    <property type="project" value="UniProtKB-UniRule"/>
</dbReference>
<dbReference type="GO" id="GO:0006235">
    <property type="term" value="P:dTTP biosynthetic process"/>
    <property type="evidence" value="ECO:0007669"/>
    <property type="project" value="UniProtKB-UniRule"/>
</dbReference>
<dbReference type="GO" id="GO:0032259">
    <property type="term" value="P:methylation"/>
    <property type="evidence" value="ECO:0007669"/>
    <property type="project" value="UniProtKB-KW"/>
</dbReference>
<dbReference type="CDD" id="cd00351">
    <property type="entry name" value="TS_Pyrimidine_HMase"/>
    <property type="match status" value="1"/>
</dbReference>
<dbReference type="Gene3D" id="3.30.572.10">
    <property type="entry name" value="Thymidylate synthase/dCMP hydroxymethylase domain"/>
    <property type="match status" value="1"/>
</dbReference>
<dbReference type="HAMAP" id="MF_00008">
    <property type="entry name" value="Thymidy_synth_bact"/>
    <property type="match status" value="1"/>
</dbReference>
<dbReference type="InterPro" id="IPR045097">
    <property type="entry name" value="Thymidate_synth/dCMP_Mease"/>
</dbReference>
<dbReference type="InterPro" id="IPR023451">
    <property type="entry name" value="Thymidate_synth/dCMP_Mease_dom"/>
</dbReference>
<dbReference type="InterPro" id="IPR036926">
    <property type="entry name" value="Thymidate_synth/dCMP_Mease_sf"/>
</dbReference>
<dbReference type="InterPro" id="IPR000398">
    <property type="entry name" value="Thymidylate_synthase"/>
</dbReference>
<dbReference type="InterPro" id="IPR020940">
    <property type="entry name" value="Thymidylate_synthase_AS"/>
</dbReference>
<dbReference type="NCBIfam" id="NF002496">
    <property type="entry name" value="PRK01827.1-2"/>
    <property type="match status" value="1"/>
</dbReference>
<dbReference type="NCBIfam" id="TIGR03284">
    <property type="entry name" value="thym_sym"/>
    <property type="match status" value="1"/>
</dbReference>
<dbReference type="PANTHER" id="PTHR11548:SF9">
    <property type="entry name" value="THYMIDYLATE SYNTHASE"/>
    <property type="match status" value="1"/>
</dbReference>
<dbReference type="PANTHER" id="PTHR11548">
    <property type="entry name" value="THYMIDYLATE SYNTHASE 1"/>
    <property type="match status" value="1"/>
</dbReference>
<dbReference type="Pfam" id="PF00303">
    <property type="entry name" value="Thymidylat_synt"/>
    <property type="match status" value="1"/>
</dbReference>
<dbReference type="PRINTS" id="PR00108">
    <property type="entry name" value="THYMDSNTHASE"/>
</dbReference>
<dbReference type="SUPFAM" id="SSF55831">
    <property type="entry name" value="Thymidylate synthase/dCMP hydroxymethylase"/>
    <property type="match status" value="1"/>
</dbReference>
<dbReference type="PROSITE" id="PS00091">
    <property type="entry name" value="THYMIDYLATE_SYNTHASE"/>
    <property type="match status" value="1"/>
</dbReference>
<accession>A5VJK9</accession>
<keyword id="KW-0963">Cytoplasm</keyword>
<keyword id="KW-0489">Methyltransferase</keyword>
<keyword id="KW-0545">Nucleotide biosynthesis</keyword>
<keyword id="KW-1185">Reference proteome</keyword>
<keyword id="KW-0808">Transferase</keyword>
<sequence>MATNVNEEQYLDLIRYVLANGHQKGDRTGTGTKSVFGYQMRFDLSKGFPILTTKKVPFGLIKSELLWFLRGDTNIRFLLQHKNHIWDEWAFKKWVESDEYQGPDMTDFGHRWLKDPEFKQVYLQEKKAFCQRILEDDDFAQKYGDLGLVYGSQWRKWKTSQGDTIDQIANVIQQIKTTPDSRRMIVSAWNPEDVPSMALPPCHTMFQFYVNDGKLSCQLYQRSADIFLGVPFNIASYALLTHMIAHQCGLEPGEFVHTLGDAHIYLNHLDQVKEQLTRTPHEAPKLILPAEPKPIDQYEMTDIKLEGYTHEPAIKAPVAV</sequence>
<feature type="chain" id="PRO_0000321469" description="Thymidylate synthase">
    <location>
        <begin position="1"/>
        <end position="320"/>
    </location>
</feature>
<feature type="active site" description="Nucleophile" evidence="1">
    <location>
        <position position="202"/>
    </location>
</feature>
<feature type="binding site" description="in other chain" evidence="1">
    <location>
        <position position="27"/>
    </location>
    <ligand>
        <name>dUMP</name>
        <dbReference type="ChEBI" id="CHEBI:246422"/>
        <note>ligand shared between dimeric partners</note>
    </ligand>
</feature>
<feature type="binding site" evidence="1">
    <location>
        <begin position="182"/>
        <end position="183"/>
    </location>
    <ligand>
        <name>dUMP</name>
        <dbReference type="ChEBI" id="CHEBI:246422"/>
        <note>ligand shared between dimeric partners</note>
    </ligand>
</feature>
<feature type="binding site" description="in other chain" evidence="1">
    <location>
        <begin position="222"/>
        <end position="225"/>
    </location>
    <ligand>
        <name>dUMP</name>
        <dbReference type="ChEBI" id="CHEBI:246422"/>
        <note>ligand shared between dimeric partners</note>
    </ligand>
</feature>
<feature type="binding site" evidence="1">
    <location>
        <position position="225"/>
    </location>
    <ligand>
        <name>(6R)-5,10-methylene-5,6,7,8-tetrahydrofolate</name>
        <dbReference type="ChEBI" id="CHEBI:15636"/>
    </ligand>
</feature>
<feature type="binding site" description="in other chain" evidence="1">
    <location>
        <position position="233"/>
    </location>
    <ligand>
        <name>dUMP</name>
        <dbReference type="ChEBI" id="CHEBI:246422"/>
        <note>ligand shared between dimeric partners</note>
    </ligand>
</feature>
<feature type="binding site" description="in other chain" evidence="1">
    <location>
        <begin position="263"/>
        <end position="265"/>
    </location>
    <ligand>
        <name>dUMP</name>
        <dbReference type="ChEBI" id="CHEBI:246422"/>
        <note>ligand shared between dimeric partners</note>
    </ligand>
</feature>
<feature type="binding site" evidence="1">
    <location>
        <position position="319"/>
    </location>
    <ligand>
        <name>(6R)-5,10-methylene-5,6,7,8-tetrahydrofolate</name>
        <dbReference type="ChEBI" id="CHEBI:15636"/>
    </ligand>
</feature>
<organism>
    <name type="scientific">Limosilactobacillus reuteri (strain DSM 20016)</name>
    <name type="common">Lactobacillus reuteri</name>
    <dbReference type="NCBI Taxonomy" id="557436"/>
    <lineage>
        <taxon>Bacteria</taxon>
        <taxon>Bacillati</taxon>
        <taxon>Bacillota</taxon>
        <taxon>Bacilli</taxon>
        <taxon>Lactobacillales</taxon>
        <taxon>Lactobacillaceae</taxon>
        <taxon>Limosilactobacillus</taxon>
    </lineage>
</organism>
<gene>
    <name evidence="1" type="primary">thyA</name>
    <name type="ordered locus">Lreu_0769</name>
</gene>
<protein>
    <recommendedName>
        <fullName evidence="1">Thymidylate synthase</fullName>
        <shortName evidence="1">TS</shortName>
        <shortName evidence="1">TSase</shortName>
        <ecNumber evidence="1">2.1.1.45</ecNumber>
    </recommendedName>
</protein>
<proteinExistence type="inferred from homology"/>
<comment type="function">
    <text evidence="1">Catalyzes the reductive methylation of 2'-deoxyuridine-5'-monophosphate (dUMP) to 2'-deoxythymidine-5'-monophosphate (dTMP) while utilizing 5,10-methylenetetrahydrofolate (mTHF) as the methyl donor and reductant in the reaction, yielding dihydrofolate (DHF) as a by-product. This enzymatic reaction provides an intracellular de novo source of dTMP, an essential precursor for DNA biosynthesis.</text>
</comment>
<comment type="catalytic activity">
    <reaction evidence="1">
        <text>dUMP + (6R)-5,10-methylene-5,6,7,8-tetrahydrofolate = 7,8-dihydrofolate + dTMP</text>
        <dbReference type="Rhea" id="RHEA:12104"/>
        <dbReference type="ChEBI" id="CHEBI:15636"/>
        <dbReference type="ChEBI" id="CHEBI:57451"/>
        <dbReference type="ChEBI" id="CHEBI:63528"/>
        <dbReference type="ChEBI" id="CHEBI:246422"/>
        <dbReference type="EC" id="2.1.1.45"/>
    </reaction>
</comment>
<comment type="pathway">
    <text evidence="1">Pyrimidine metabolism; dTTP biosynthesis.</text>
</comment>
<comment type="subunit">
    <text evidence="1">Homodimer.</text>
</comment>
<comment type="subcellular location">
    <subcellularLocation>
        <location evidence="1">Cytoplasm</location>
    </subcellularLocation>
</comment>
<comment type="similarity">
    <text evidence="1">Belongs to the thymidylate synthase family. Bacterial-type ThyA subfamily.</text>
</comment>
<evidence type="ECO:0000255" key="1">
    <source>
        <dbReference type="HAMAP-Rule" id="MF_00008"/>
    </source>
</evidence>